<keyword id="KW-0067">ATP-binding</keyword>
<keyword id="KW-0963">Cytoplasm</keyword>
<keyword id="KW-0235">DNA replication</keyword>
<keyword id="KW-0238">DNA-binding</keyword>
<keyword id="KW-0446">Lipid-binding</keyword>
<keyword id="KW-0547">Nucleotide-binding</keyword>
<keyword id="KW-1185">Reference proteome</keyword>
<protein>
    <recommendedName>
        <fullName evidence="1">Chromosomal replication initiator protein DnaA</fullName>
    </recommendedName>
</protein>
<sequence length="475" mass="52924">MSDTEQERWSRVKGRLRSTVGEDIYSSWFARMDLESVHGESVRLSVPTRFLKSWIQAHYAERVLSCWQAELPDVHRIDLTVRSAMRCAAPVREAPATDARHPERSEGRNGVELKTVATAPASANHDALGGSPLDPRLTFQSFVTGRSNTLAHAAARQVAEGRRGDSVMFNPLYIHAGVGLGKTHLLQAVTWAGNAGTERRVLYLTAEKFMYGFVAALKTQTALAFKEALRGIDVLVIDDLQFLQGKSTQAEFCHTLNALIDAGRQVVIAADRPPSDLESLDDRVRSRLAGGLVVEMGSLGEELRLGILRSRVEAARVHHASFDVPEPVLDYLAKAITHNGRDLEGAINRLLAHSKLNAQPVTLEMAEREVRDLVRPQEPRRIKIEDIQRVVARQYNVSRSDLLSSRRTANVVRPRQVAMYLAKTLTLRSLPEIGRRFGGRDHTTVLHAVRKIEALVSKDTTLSDEVELLKRQLQE</sequence>
<organism>
    <name type="scientific">Nitrobacter winogradskyi (strain ATCC 25391 / DSM 10237 / CIP 104748 / NCIMB 11846 / Nb-255)</name>
    <dbReference type="NCBI Taxonomy" id="323098"/>
    <lineage>
        <taxon>Bacteria</taxon>
        <taxon>Pseudomonadati</taxon>
        <taxon>Pseudomonadota</taxon>
        <taxon>Alphaproteobacteria</taxon>
        <taxon>Hyphomicrobiales</taxon>
        <taxon>Nitrobacteraceae</taxon>
        <taxon>Nitrobacter</taxon>
    </lineage>
</organism>
<reference key="1">
    <citation type="journal article" date="2006" name="Appl. Environ. Microbiol.">
        <title>Genome sequence of the chemolithoautotrophic nitrite-oxidizing bacterium Nitrobacter winogradskyi Nb-255.</title>
        <authorList>
            <person name="Starkenburg S.R."/>
            <person name="Chain P.S.G."/>
            <person name="Sayavedra-Soto L.A."/>
            <person name="Hauser L."/>
            <person name="Land M.L."/>
            <person name="Larimer F.W."/>
            <person name="Malfatti S.A."/>
            <person name="Klotz M.G."/>
            <person name="Bottomley P.J."/>
            <person name="Arp D.J."/>
            <person name="Hickey W.J."/>
        </authorList>
    </citation>
    <scope>NUCLEOTIDE SEQUENCE [LARGE SCALE GENOMIC DNA]</scope>
    <source>
        <strain>ATCC 25391 / DSM 10237 / CIP 104748 / NCIMB 11846 / Nb-255</strain>
    </source>
</reference>
<comment type="function">
    <text evidence="1">Plays an essential role in the initiation and regulation of chromosomal replication. ATP-DnaA binds to the origin of replication (oriC) to initiate formation of the DNA replication initiation complex once per cell cycle. Binds the DnaA box (a 9 base pair repeat at the origin) and separates the double-stranded (ds)DNA. Forms a right-handed helical filament on oriC DNA; dsDNA binds to the exterior of the filament while single-stranded (ss)DNA is stabiized in the filament's interior. The ATP-DnaA-oriC complex binds and stabilizes one strand of the AT-rich DNA unwinding element (DUE), permitting loading of DNA polymerase. After initiation quickly degrades to an ADP-DnaA complex that is not apt for DNA replication. Binds acidic phospholipids.</text>
</comment>
<comment type="subunit">
    <text evidence="1">Oligomerizes as a right-handed, spiral filament on DNA at oriC.</text>
</comment>
<comment type="subcellular location">
    <subcellularLocation>
        <location evidence="1">Cytoplasm</location>
    </subcellularLocation>
</comment>
<comment type="domain">
    <text evidence="1">Domain I is involved in oligomerization and binding regulators, domain II is flexibile and of varying length in different bacteria, domain III forms the AAA+ region, while domain IV binds dsDNA.</text>
</comment>
<comment type="similarity">
    <text evidence="1">Belongs to the DnaA family.</text>
</comment>
<dbReference type="EMBL" id="CP000115">
    <property type="protein sequence ID" value="ABA03269.1"/>
    <property type="molecule type" value="Genomic_DNA"/>
</dbReference>
<dbReference type="RefSeq" id="WP_011313340.1">
    <property type="nucleotide sequence ID" value="NC_007406.1"/>
</dbReference>
<dbReference type="SMR" id="Q3SMV0"/>
<dbReference type="STRING" id="323098.Nwi_0001"/>
<dbReference type="KEGG" id="nwi:Nwi_0001"/>
<dbReference type="eggNOG" id="COG0593">
    <property type="taxonomic scope" value="Bacteria"/>
</dbReference>
<dbReference type="HOGENOM" id="CLU_026910_3_0_5"/>
<dbReference type="OrthoDB" id="9807019at2"/>
<dbReference type="Proteomes" id="UP000002531">
    <property type="component" value="Chromosome"/>
</dbReference>
<dbReference type="GO" id="GO:0005737">
    <property type="term" value="C:cytoplasm"/>
    <property type="evidence" value="ECO:0007669"/>
    <property type="project" value="UniProtKB-SubCell"/>
</dbReference>
<dbReference type="GO" id="GO:0005886">
    <property type="term" value="C:plasma membrane"/>
    <property type="evidence" value="ECO:0007669"/>
    <property type="project" value="TreeGrafter"/>
</dbReference>
<dbReference type="GO" id="GO:0005524">
    <property type="term" value="F:ATP binding"/>
    <property type="evidence" value="ECO:0007669"/>
    <property type="project" value="UniProtKB-UniRule"/>
</dbReference>
<dbReference type="GO" id="GO:0016887">
    <property type="term" value="F:ATP hydrolysis activity"/>
    <property type="evidence" value="ECO:0007669"/>
    <property type="project" value="InterPro"/>
</dbReference>
<dbReference type="GO" id="GO:0003688">
    <property type="term" value="F:DNA replication origin binding"/>
    <property type="evidence" value="ECO:0007669"/>
    <property type="project" value="UniProtKB-UniRule"/>
</dbReference>
<dbReference type="GO" id="GO:0008289">
    <property type="term" value="F:lipid binding"/>
    <property type="evidence" value="ECO:0007669"/>
    <property type="project" value="UniProtKB-KW"/>
</dbReference>
<dbReference type="GO" id="GO:0006270">
    <property type="term" value="P:DNA replication initiation"/>
    <property type="evidence" value="ECO:0007669"/>
    <property type="project" value="UniProtKB-UniRule"/>
</dbReference>
<dbReference type="GO" id="GO:0006275">
    <property type="term" value="P:regulation of DNA replication"/>
    <property type="evidence" value="ECO:0007669"/>
    <property type="project" value="UniProtKB-UniRule"/>
</dbReference>
<dbReference type="CDD" id="cd00009">
    <property type="entry name" value="AAA"/>
    <property type="match status" value="1"/>
</dbReference>
<dbReference type="CDD" id="cd06571">
    <property type="entry name" value="Bac_DnaA_C"/>
    <property type="match status" value="1"/>
</dbReference>
<dbReference type="FunFam" id="1.10.1750.10:FF:000002">
    <property type="entry name" value="Chromosomal replication initiator protein DnaA"/>
    <property type="match status" value="1"/>
</dbReference>
<dbReference type="FunFam" id="3.40.50.300:FF:000668">
    <property type="entry name" value="Chromosomal replication initiator protein DnaA"/>
    <property type="match status" value="1"/>
</dbReference>
<dbReference type="Gene3D" id="1.10.1750.10">
    <property type="match status" value="1"/>
</dbReference>
<dbReference type="Gene3D" id="1.10.8.60">
    <property type="match status" value="1"/>
</dbReference>
<dbReference type="Gene3D" id="3.30.300.180">
    <property type="match status" value="1"/>
</dbReference>
<dbReference type="Gene3D" id="3.40.50.300">
    <property type="entry name" value="P-loop containing nucleotide triphosphate hydrolases"/>
    <property type="match status" value="1"/>
</dbReference>
<dbReference type="HAMAP" id="MF_00377">
    <property type="entry name" value="DnaA_bact"/>
    <property type="match status" value="1"/>
</dbReference>
<dbReference type="InterPro" id="IPR003593">
    <property type="entry name" value="AAA+_ATPase"/>
</dbReference>
<dbReference type="InterPro" id="IPR001957">
    <property type="entry name" value="Chromosome_initiator_DnaA"/>
</dbReference>
<dbReference type="InterPro" id="IPR020591">
    <property type="entry name" value="Chromosome_initiator_DnaA-like"/>
</dbReference>
<dbReference type="InterPro" id="IPR018312">
    <property type="entry name" value="Chromosome_initiator_DnaA_CS"/>
</dbReference>
<dbReference type="InterPro" id="IPR013159">
    <property type="entry name" value="DnaA_C"/>
</dbReference>
<dbReference type="InterPro" id="IPR013317">
    <property type="entry name" value="DnaA_dom"/>
</dbReference>
<dbReference type="InterPro" id="IPR024633">
    <property type="entry name" value="DnaA_N_dom"/>
</dbReference>
<dbReference type="InterPro" id="IPR038454">
    <property type="entry name" value="DnaA_N_sf"/>
</dbReference>
<dbReference type="InterPro" id="IPR027417">
    <property type="entry name" value="P-loop_NTPase"/>
</dbReference>
<dbReference type="InterPro" id="IPR010921">
    <property type="entry name" value="Trp_repressor/repl_initiator"/>
</dbReference>
<dbReference type="NCBIfam" id="TIGR00362">
    <property type="entry name" value="DnaA"/>
    <property type="match status" value="1"/>
</dbReference>
<dbReference type="PANTHER" id="PTHR30050">
    <property type="entry name" value="CHROMOSOMAL REPLICATION INITIATOR PROTEIN DNAA"/>
    <property type="match status" value="1"/>
</dbReference>
<dbReference type="PANTHER" id="PTHR30050:SF2">
    <property type="entry name" value="CHROMOSOMAL REPLICATION INITIATOR PROTEIN DNAA"/>
    <property type="match status" value="1"/>
</dbReference>
<dbReference type="Pfam" id="PF00308">
    <property type="entry name" value="Bac_DnaA"/>
    <property type="match status" value="1"/>
</dbReference>
<dbReference type="Pfam" id="PF08299">
    <property type="entry name" value="Bac_DnaA_C"/>
    <property type="match status" value="1"/>
</dbReference>
<dbReference type="Pfam" id="PF11638">
    <property type="entry name" value="DnaA_N"/>
    <property type="match status" value="1"/>
</dbReference>
<dbReference type="PRINTS" id="PR00051">
    <property type="entry name" value="DNAA"/>
</dbReference>
<dbReference type="SMART" id="SM00382">
    <property type="entry name" value="AAA"/>
    <property type="match status" value="1"/>
</dbReference>
<dbReference type="SMART" id="SM00760">
    <property type="entry name" value="Bac_DnaA_C"/>
    <property type="match status" value="1"/>
</dbReference>
<dbReference type="SUPFAM" id="SSF52540">
    <property type="entry name" value="P-loop containing nucleoside triphosphate hydrolases"/>
    <property type="match status" value="1"/>
</dbReference>
<dbReference type="SUPFAM" id="SSF48295">
    <property type="entry name" value="TrpR-like"/>
    <property type="match status" value="1"/>
</dbReference>
<dbReference type="PROSITE" id="PS01008">
    <property type="entry name" value="DNAA"/>
    <property type="match status" value="1"/>
</dbReference>
<name>DNAA_NITWN</name>
<feature type="chain" id="PRO_1000048682" description="Chromosomal replication initiator protein DnaA">
    <location>
        <begin position="1"/>
        <end position="475"/>
    </location>
</feature>
<feature type="region of interest" description="Domain I, interacts with DnaA modulators" evidence="1">
    <location>
        <begin position="1"/>
        <end position="73"/>
    </location>
</feature>
<feature type="region of interest" description="Domain II" evidence="1">
    <location>
        <begin position="73"/>
        <end position="131"/>
    </location>
</feature>
<feature type="region of interest" description="Domain III, AAA+ region" evidence="1">
    <location>
        <begin position="132"/>
        <end position="354"/>
    </location>
</feature>
<feature type="region of interest" description="Domain IV, binds dsDNA" evidence="1">
    <location>
        <begin position="355"/>
        <end position="475"/>
    </location>
</feature>
<feature type="binding site" evidence="1">
    <location>
        <position position="179"/>
    </location>
    <ligand>
        <name>ATP</name>
        <dbReference type="ChEBI" id="CHEBI:30616"/>
    </ligand>
</feature>
<feature type="binding site" evidence="1">
    <location>
        <position position="181"/>
    </location>
    <ligand>
        <name>ATP</name>
        <dbReference type="ChEBI" id="CHEBI:30616"/>
    </ligand>
</feature>
<feature type="binding site" evidence="1">
    <location>
        <position position="182"/>
    </location>
    <ligand>
        <name>ATP</name>
        <dbReference type="ChEBI" id="CHEBI:30616"/>
    </ligand>
</feature>
<feature type="binding site" evidence="1">
    <location>
        <position position="183"/>
    </location>
    <ligand>
        <name>ATP</name>
        <dbReference type="ChEBI" id="CHEBI:30616"/>
    </ligand>
</feature>
<proteinExistence type="inferred from homology"/>
<gene>
    <name evidence="1" type="primary">dnaA</name>
    <name type="ordered locus">Nwi_0001</name>
</gene>
<accession>Q3SMV0</accession>
<evidence type="ECO:0000255" key="1">
    <source>
        <dbReference type="HAMAP-Rule" id="MF_00377"/>
    </source>
</evidence>